<accession>Q60563</accession>
<evidence type="ECO:0000250" key="1">
    <source>
        <dbReference type="UniProtKB" id="Q03410"/>
    </source>
</evidence>
<evidence type="ECO:0000250" key="2">
    <source>
        <dbReference type="UniProtKB" id="Q15431"/>
    </source>
</evidence>
<evidence type="ECO:0000250" key="3">
    <source>
        <dbReference type="UniProtKB" id="Q62209"/>
    </source>
</evidence>
<evidence type="ECO:0000255" key="4"/>
<evidence type="ECO:0000256" key="5">
    <source>
        <dbReference type="SAM" id="MobiDB-lite"/>
    </source>
</evidence>
<proteinExistence type="evidence at transcript level"/>
<gene>
    <name evidence="3" type="primary">SYCP1</name>
    <name type="synonym">SYN1</name>
</gene>
<reference key="1">
    <citation type="journal article" date="1994" name="J. Cell Sci.">
        <title>Synaptonemal complex proteins: occurrence, epitope mapping and chromosome disjunction.</title>
        <authorList>
            <person name="Dobson M.J."/>
            <person name="Pearlman R.E."/>
            <person name="Karaiskakis A."/>
            <person name="Spyropoulos B."/>
            <person name="Moens P.B."/>
        </authorList>
    </citation>
    <scope>NUCLEOTIDE SEQUENCE [MRNA]</scope>
    <source>
        <tissue>Testis</tissue>
    </source>
</reference>
<feature type="chain" id="PRO_0000072363" description="Synaptonemal complex protein 1">
    <location>
        <begin position="1" status="less than"/>
        <end position="845"/>
    </location>
</feature>
<feature type="region of interest" description="Interaction with SYCE3" evidence="2">
    <location>
        <begin position="59"/>
        <end position="215"/>
    </location>
</feature>
<feature type="region of interest" description="Required for pH-induced assembly of C-terminal ends into antiparallel tetramers" evidence="2">
    <location>
        <begin position="550"/>
        <end position="644"/>
    </location>
</feature>
<feature type="region of interest" description="DNA-binding" evidence="2">
    <location>
        <begin position="657"/>
        <end position="845"/>
    </location>
</feature>
<feature type="region of interest" description="Disordered" evidence="5">
    <location>
        <begin position="684"/>
        <end position="709"/>
    </location>
</feature>
<feature type="region of interest" description="Disordered" evidence="5">
    <location>
        <begin position="786"/>
        <end position="808"/>
    </location>
</feature>
<feature type="coiled-coil region" evidence="4">
    <location>
        <begin position="64"/>
        <end position="211"/>
    </location>
</feature>
<feature type="coiled-coil region" evidence="4">
    <location>
        <begin position="244"/>
        <end position="544"/>
    </location>
</feature>
<feature type="coiled-coil region" evidence="4">
    <location>
        <begin position="620"/>
        <end position="663"/>
    </location>
</feature>
<feature type="short sequence motif" description="Nuclear localization signal" evidence="4">
    <location>
        <begin position="553"/>
        <end position="556"/>
    </location>
</feature>
<feature type="short sequence motif" description="Nuclear localization signal" evidence="4">
    <location>
        <begin position="753"/>
        <end position="756"/>
    </location>
</feature>
<feature type="compositionally biased region" description="Polar residues" evidence="5">
    <location>
        <begin position="684"/>
        <end position="703"/>
    </location>
</feature>
<feature type="modified residue" description="Phosphoserine" evidence="3">
    <location>
        <position position="676"/>
    </location>
</feature>
<feature type="non-terminal residue">
    <location>
        <position position="1"/>
    </location>
</feature>
<name>SYCP1_MESAU</name>
<dbReference type="EMBL" id="L32978">
    <property type="protein sequence ID" value="AAC42039.1"/>
    <property type="molecule type" value="mRNA"/>
</dbReference>
<dbReference type="PIR" id="I48176">
    <property type="entry name" value="I48176"/>
</dbReference>
<dbReference type="SMR" id="Q60563"/>
<dbReference type="STRING" id="10036.ENSMAUP00000000410"/>
<dbReference type="eggNOG" id="ENOG502QTHX">
    <property type="taxonomic scope" value="Eukaryota"/>
</dbReference>
<dbReference type="Proteomes" id="UP000189706">
    <property type="component" value="Unplaced"/>
</dbReference>
<dbReference type="GO" id="GO:0000801">
    <property type="term" value="C:central element"/>
    <property type="evidence" value="ECO:0007669"/>
    <property type="project" value="TreeGrafter"/>
</dbReference>
<dbReference type="GO" id="GO:0005694">
    <property type="term" value="C:chromosome"/>
    <property type="evidence" value="ECO:0000250"/>
    <property type="project" value="UniProtKB"/>
</dbReference>
<dbReference type="GO" id="GO:0000775">
    <property type="term" value="C:chromosome, centromeric region"/>
    <property type="evidence" value="ECO:0007669"/>
    <property type="project" value="UniProtKB-SubCell"/>
</dbReference>
<dbReference type="GO" id="GO:0001673">
    <property type="term" value="C:male germ cell nucleus"/>
    <property type="evidence" value="ECO:0007669"/>
    <property type="project" value="TreeGrafter"/>
</dbReference>
<dbReference type="GO" id="GO:0000802">
    <property type="term" value="C:transverse filament"/>
    <property type="evidence" value="ECO:0007669"/>
    <property type="project" value="TreeGrafter"/>
</dbReference>
<dbReference type="GO" id="GO:0003690">
    <property type="term" value="F:double-stranded DNA binding"/>
    <property type="evidence" value="ECO:0000250"/>
    <property type="project" value="UniProtKB"/>
</dbReference>
<dbReference type="GO" id="GO:0051301">
    <property type="term" value="P:cell division"/>
    <property type="evidence" value="ECO:0007669"/>
    <property type="project" value="UniProtKB-KW"/>
</dbReference>
<dbReference type="GO" id="GO:0051026">
    <property type="term" value="P:chiasma assembly"/>
    <property type="evidence" value="ECO:0007669"/>
    <property type="project" value="TreeGrafter"/>
</dbReference>
<dbReference type="GO" id="GO:0051878">
    <property type="term" value="P:lateral element assembly"/>
    <property type="evidence" value="ECO:0007669"/>
    <property type="project" value="TreeGrafter"/>
</dbReference>
<dbReference type="GO" id="GO:0000711">
    <property type="term" value="P:meiotic DNA repair synthesis"/>
    <property type="evidence" value="ECO:0007669"/>
    <property type="project" value="TreeGrafter"/>
</dbReference>
<dbReference type="GO" id="GO:0051289">
    <property type="term" value="P:protein homotetramerization"/>
    <property type="evidence" value="ECO:0000250"/>
    <property type="project" value="UniProtKB"/>
</dbReference>
<dbReference type="InterPro" id="IPR008827">
    <property type="entry name" value="SYCP1"/>
</dbReference>
<dbReference type="PANTHER" id="PTHR46918">
    <property type="entry name" value="SYNAPTONEMAL COMPLEX PROTEIN 1"/>
    <property type="match status" value="1"/>
</dbReference>
<dbReference type="PANTHER" id="PTHR46918:SF1">
    <property type="entry name" value="SYNAPTONEMAL COMPLEX PROTEIN 1"/>
    <property type="match status" value="1"/>
</dbReference>
<dbReference type="Pfam" id="PF05483">
    <property type="entry name" value="SCP-1"/>
    <property type="match status" value="1"/>
</dbReference>
<keyword id="KW-0131">Cell cycle</keyword>
<keyword id="KW-0132">Cell division</keyword>
<keyword id="KW-0137">Centromere</keyword>
<keyword id="KW-0158">Chromosome</keyword>
<keyword id="KW-0175">Coiled coil</keyword>
<keyword id="KW-0238">DNA-binding</keyword>
<keyword id="KW-0469">Meiosis</keyword>
<keyword id="KW-0539">Nucleus</keyword>
<keyword id="KW-0597">Phosphoprotein</keyword>
<keyword id="KW-1185">Reference proteome</keyword>
<organism>
    <name type="scientific">Mesocricetus auratus</name>
    <name type="common">Golden hamster</name>
    <dbReference type="NCBI Taxonomy" id="10036"/>
    <lineage>
        <taxon>Eukaryota</taxon>
        <taxon>Metazoa</taxon>
        <taxon>Chordata</taxon>
        <taxon>Craniata</taxon>
        <taxon>Vertebrata</taxon>
        <taxon>Euteleostomi</taxon>
        <taxon>Mammalia</taxon>
        <taxon>Eutheria</taxon>
        <taxon>Euarchontoglires</taxon>
        <taxon>Glires</taxon>
        <taxon>Rodentia</taxon>
        <taxon>Myomorpha</taxon>
        <taxon>Muroidea</taxon>
        <taxon>Cricetidae</taxon>
        <taxon>Cricetinae</taxon>
        <taxon>Mesocricetus</taxon>
    </lineage>
</organism>
<protein>
    <recommendedName>
        <fullName evidence="3">Synaptonemal complex protein 1</fullName>
        <shortName>SCP-1</shortName>
    </recommendedName>
    <alternativeName>
        <fullName>Meiotic chromosome synaptic protein</fullName>
    </alternativeName>
</protein>
<comment type="function">
    <text evidence="3">Major component of the transverse filaments of synaptonemal complexes, formed between homologous chromosomes during meiotic prophase (By similarity). Required for normal assembly of the central element of the synaptonemal complexes (By similarity). Required for normal centromere pairing during meiosis (By similarity). Required for normal meiotic chromosome synapsis during oocyte and spermatocyte development and for normal male and female fertility (By similarity).</text>
</comment>
<comment type="subunit">
    <text evidence="2 3">Structural component of synaptonemal complexes (By similarity). Homotetramer that consists of an N-terminal four-helical bundle that bifurcates into two elongated C-terminal dimeric coiled coils (By similarity). This tetrameric building block potentially self-assembles into a supramolecular zipper-like lattice to mediate meiotic chromosome synapsis. Self-assembly is likely initiated by local proton density at chromosome axis, which is predicted to trigger antiparallel back to back assembly of adjacent C-terminal ends into tetrameric structures that anchor to chromosomal DNA. Then the N-terminal ends are predicted to undergo cooperative antiparallel head to head assembly at the midline of synaptonemal complexes central element to form a zipper-like lattice between properly aligned homologous chromosomes (By similarity). The nascent synapsis generated by SYCP1 is stabilized through interaction with central element proteins SYCE1 and SYCE2 (By similarity). Interacts (via tetrameric core) with SYCE3; the interaction remodels SYCP1 homotetramers to 2:1 heterotrimers with SYCE3 (By similarity). SYCP1/SYCE3 heterotrimers form lattice assemblies as part of the mature synaptonemal complex via both lateral and head-to-head interactions (By similarity). Forms a complex with EWSR1, PRDM9, SYCP3 and REC8; complex formation is dependent of phosphorylated form of REC8 and requires PRDM9 bound to hotspot DNA; EWSR1 joins PRDM9 with the chromosomal axis through REC8 (By similarity). Interacts with SPO16 (By similarity).</text>
</comment>
<comment type="subcellular location">
    <subcellularLocation>
        <location evidence="3">Nucleus</location>
    </subcellularLocation>
    <subcellularLocation>
        <location evidence="3">Chromosome</location>
    </subcellularLocation>
    <subcellularLocation>
        <location evidence="3">Chromosome</location>
        <location evidence="3">Centromere</location>
    </subcellularLocation>
    <text evidence="1 3">In tripartite segments of synaptonemal complexes, between lateral elements in the nucleus. Found only where the chromosome cores are synapsed. Its N-terminus is found towards the center of the synaptonemal complex while the C-terminus extends well into the lateral domain of the synaptonemal complex. Only rarely detected at centromeres during leptotene and zygotene. Detected at centromeres during mid-diplotene, when it is no longer present along chromosome arms. No longer detected at centromeres at later stages of meiosis (By similarity).</text>
</comment>
<comment type="domain">
    <text evidence="2">The molecule is in a coiled coil structure that is formed by 4 polypeptide chains. The N-terminal and C-terminal regions exhibit a prominent seven-residues periodicity.</text>
</comment>
<sequence length="845" mass="99401">IVELQFEKEKVSLKLEEEIQENKDLIKENNATRHLCNLLKETSARSAEKTNKYEYEREETRQVYVDLNNNIEKMILAFEELRVQAENARLDMHFKLKEDHEKIQHLQEEYKKEVNDKENQVSLLLIQRTEKENKMKDLTFLLEESRDKVNQLEDKTKLQDENVKELNKKKDHLTSELEDTKMSLQRSMNTQKALEEDLQIATKTIYQLTEEKEAQMEEFNKAKTDHSFMVTELKATTCTLEELLRTEQQRLVKNEDQLKILTMELQKKSNELDEMTKFKNNNEVKLEELKKILAEDQKLLDEKKQVEKLAEELQGKEQELTLLLQTREKEVHDLEEQLLVTKISDQNYSKQVEELKTKLEEEKLKNAELTASCGKLSLENNKLTQETNDMALELKKYQEDITNSKKQEERMLKQIENLEEKETHLRDELESVRKEFIQQGNEVKCKLDKSEENARSIECEVLKKEKQMKILENKCNNLRKQAENKSKYIEELHQENKALKKKSSAESKQLNAYEIKVNKLQLELESAKQKFQEMTDNYQKEIEVKKISEEKLLGEVEKAKAMVDEAVKLQKEIDLRCQHKIAEMVALMEKHKHQYDKIVEERDSELGLCKNREQEQLSVKTALETELSNIRNELVSLKKQLEIEREEKEKLKLEKENTAILKDKKDKKIQTSLLESAETTCQKFDSKTTPSQNISRISSSMESGKTKDNRDCLRTSAKILSTAFVKEYTVKTPTKMQMYQRENKYIPTGRSNKKRKTVFEFDVNSDSSETTDLLSMVSEEEISNRLYNNNSPNSHLTPKQTPLSLSTPESFVSLGGVRKMREDRWATIAKTDRKRRLKEAEKLFA</sequence>